<organism>
    <name type="scientific">Mycolicibacterium gilvum (strain PYR-GCK)</name>
    <name type="common">Mycobacterium gilvum (strain PYR-GCK)</name>
    <dbReference type="NCBI Taxonomy" id="350054"/>
    <lineage>
        <taxon>Bacteria</taxon>
        <taxon>Bacillati</taxon>
        <taxon>Actinomycetota</taxon>
        <taxon>Actinomycetes</taxon>
        <taxon>Mycobacteriales</taxon>
        <taxon>Mycobacteriaceae</taxon>
        <taxon>Mycolicibacterium</taxon>
    </lineage>
</organism>
<keyword id="KW-0963">Cytoplasm</keyword>
<keyword id="KW-0694">RNA-binding</keyword>
<evidence type="ECO:0000255" key="1">
    <source>
        <dbReference type="HAMAP-Rule" id="MF_00023"/>
    </source>
</evidence>
<evidence type="ECO:0000256" key="2">
    <source>
        <dbReference type="SAM" id="MobiDB-lite"/>
    </source>
</evidence>
<proteinExistence type="inferred from homology"/>
<protein>
    <recommendedName>
        <fullName evidence="1">SsrA-binding protein</fullName>
    </recommendedName>
    <alternativeName>
        <fullName evidence="1">Small protein B</fullName>
    </alternativeName>
</protein>
<name>SSRP_MYCGI</name>
<comment type="function">
    <text evidence="1">Required for rescue of stalled ribosomes mediated by trans-translation. Binds to transfer-messenger RNA (tmRNA), required for stable association of tmRNA with ribosomes. tmRNA and SmpB together mimic tRNA shape, replacing the anticodon stem-loop with SmpB. tmRNA is encoded by the ssrA gene; the 2 termini fold to resemble tRNA(Ala) and it encodes a 'tag peptide', a short internal open reading frame. During trans-translation Ala-aminoacylated tmRNA acts like a tRNA, entering the A-site of stalled ribosomes, displacing the stalled mRNA. The ribosome then switches to translate the ORF on the tmRNA; the nascent peptide is terminated with the 'tag peptide' encoded by the tmRNA and targeted for degradation. The ribosome is freed to recommence translation, which seems to be the essential function of trans-translation.</text>
</comment>
<comment type="subcellular location">
    <subcellularLocation>
        <location evidence="1">Cytoplasm</location>
    </subcellularLocation>
    <text evidence="1">The tmRNA-SmpB complex associates with stalled 70S ribosomes.</text>
</comment>
<comment type="similarity">
    <text evidence="1">Belongs to the SmpB family.</text>
</comment>
<accession>A4TDF4</accession>
<sequence>MAKKPKSVKDTNNMVVASNRKARHNYSILETYEAGVALVGTEVKSLRDGTASLADAFATVDDGEIWLRNLHIPEYHHGSWTNHAPRRNRKLLMHRREIDNLVGKIRDGNLTLVPLSLYFTGGKVKVELALARGKQAHDKRQDMARRDAQREVTRELGRRVKGMTN</sequence>
<feature type="chain" id="PRO_1000074357" description="SsrA-binding protein">
    <location>
        <begin position="1"/>
        <end position="165"/>
    </location>
</feature>
<feature type="region of interest" description="Disordered" evidence="2">
    <location>
        <begin position="135"/>
        <end position="165"/>
    </location>
</feature>
<feature type="compositionally biased region" description="Basic and acidic residues" evidence="2">
    <location>
        <begin position="135"/>
        <end position="158"/>
    </location>
</feature>
<dbReference type="EMBL" id="CP000656">
    <property type="protein sequence ID" value="ABP46915.1"/>
    <property type="molecule type" value="Genomic_DNA"/>
</dbReference>
<dbReference type="SMR" id="A4TDF4"/>
<dbReference type="STRING" id="350054.Mflv_4446"/>
<dbReference type="KEGG" id="mgi:Mflv_4446"/>
<dbReference type="eggNOG" id="COG0691">
    <property type="taxonomic scope" value="Bacteria"/>
</dbReference>
<dbReference type="HOGENOM" id="CLU_108953_2_1_11"/>
<dbReference type="OrthoDB" id="9805462at2"/>
<dbReference type="GO" id="GO:0005829">
    <property type="term" value="C:cytosol"/>
    <property type="evidence" value="ECO:0007669"/>
    <property type="project" value="TreeGrafter"/>
</dbReference>
<dbReference type="GO" id="GO:0003723">
    <property type="term" value="F:RNA binding"/>
    <property type="evidence" value="ECO:0007669"/>
    <property type="project" value="UniProtKB-UniRule"/>
</dbReference>
<dbReference type="GO" id="GO:0070929">
    <property type="term" value="P:trans-translation"/>
    <property type="evidence" value="ECO:0007669"/>
    <property type="project" value="UniProtKB-UniRule"/>
</dbReference>
<dbReference type="CDD" id="cd09294">
    <property type="entry name" value="SmpB"/>
    <property type="match status" value="1"/>
</dbReference>
<dbReference type="Gene3D" id="2.40.280.10">
    <property type="match status" value="1"/>
</dbReference>
<dbReference type="HAMAP" id="MF_00023">
    <property type="entry name" value="SmpB"/>
    <property type="match status" value="1"/>
</dbReference>
<dbReference type="InterPro" id="IPR023620">
    <property type="entry name" value="SmpB"/>
</dbReference>
<dbReference type="InterPro" id="IPR000037">
    <property type="entry name" value="SsrA-bd_prot"/>
</dbReference>
<dbReference type="InterPro" id="IPR020081">
    <property type="entry name" value="SsrA-bd_prot_CS"/>
</dbReference>
<dbReference type="NCBIfam" id="NF003843">
    <property type="entry name" value="PRK05422.1"/>
    <property type="match status" value="1"/>
</dbReference>
<dbReference type="NCBIfam" id="TIGR00086">
    <property type="entry name" value="smpB"/>
    <property type="match status" value="1"/>
</dbReference>
<dbReference type="PANTHER" id="PTHR30308:SF2">
    <property type="entry name" value="SSRA-BINDING PROTEIN"/>
    <property type="match status" value="1"/>
</dbReference>
<dbReference type="PANTHER" id="PTHR30308">
    <property type="entry name" value="TMRNA-BINDING COMPONENT OF TRANS-TRANSLATION TAGGING COMPLEX"/>
    <property type="match status" value="1"/>
</dbReference>
<dbReference type="Pfam" id="PF01668">
    <property type="entry name" value="SmpB"/>
    <property type="match status" value="1"/>
</dbReference>
<dbReference type="SUPFAM" id="SSF74982">
    <property type="entry name" value="Small protein B (SmpB)"/>
    <property type="match status" value="1"/>
</dbReference>
<dbReference type="PROSITE" id="PS01317">
    <property type="entry name" value="SSRP"/>
    <property type="match status" value="1"/>
</dbReference>
<reference key="1">
    <citation type="submission" date="2007-04" db="EMBL/GenBank/DDBJ databases">
        <title>Complete sequence of chromosome of Mycobacterium gilvum PYR-GCK.</title>
        <authorList>
            <consortium name="US DOE Joint Genome Institute"/>
            <person name="Copeland A."/>
            <person name="Lucas S."/>
            <person name="Lapidus A."/>
            <person name="Barry K."/>
            <person name="Detter J.C."/>
            <person name="Glavina del Rio T."/>
            <person name="Hammon N."/>
            <person name="Israni S."/>
            <person name="Dalin E."/>
            <person name="Tice H."/>
            <person name="Pitluck S."/>
            <person name="Chain P."/>
            <person name="Malfatti S."/>
            <person name="Shin M."/>
            <person name="Vergez L."/>
            <person name="Schmutz J."/>
            <person name="Larimer F."/>
            <person name="Land M."/>
            <person name="Hauser L."/>
            <person name="Kyrpides N."/>
            <person name="Mikhailova N."/>
            <person name="Miller C."/>
            <person name="Richardson P."/>
        </authorList>
    </citation>
    <scope>NUCLEOTIDE SEQUENCE [LARGE SCALE GENOMIC DNA]</scope>
    <source>
        <strain>PYR-GCK</strain>
    </source>
</reference>
<gene>
    <name evidence="1" type="primary">smpB</name>
    <name type="ordered locus">Mflv_4446</name>
</gene>